<feature type="initiator methionine" description="Removed" evidence="1">
    <location>
        <position position="1"/>
    </location>
</feature>
<feature type="chain" id="PRO_0000218685" description="Pyocin-S1">
    <location>
        <begin position="2"/>
        <end position="618"/>
    </location>
</feature>
<reference key="1">
    <citation type="journal article" date="1993" name="J. Bacteriol.">
        <title>Molecular structures and functions of pyocins S1 and S2 in Pseudomonas aeruginosa.</title>
        <authorList>
            <person name="Sano Y."/>
            <person name="Matsui H."/>
            <person name="Kobayashi M."/>
            <person name="Kageyama M."/>
        </authorList>
    </citation>
    <scope>NUCLEOTIDE SEQUENCE [GENOMIC DNA]</scope>
    <scope>PROTEIN SEQUENCE OF 2-13 AND 484-504</scope>
    <source>
        <strain>NIH-H</strain>
    </source>
</reference>
<name>PYS1_PSEAI</name>
<dbReference type="EC" id="3.1.-.-"/>
<dbReference type="EMBL" id="D12707">
    <property type="protein sequence ID" value="BAA02201.1"/>
    <property type="molecule type" value="Genomic_DNA"/>
</dbReference>
<dbReference type="PIR" id="A36907">
    <property type="entry name" value="A36907"/>
</dbReference>
<dbReference type="SMR" id="Q06583"/>
<dbReference type="eggNOG" id="COG4104">
    <property type="taxonomic scope" value="Bacteria"/>
</dbReference>
<dbReference type="GO" id="GO:0004519">
    <property type="term" value="F:endonuclease activity"/>
    <property type="evidence" value="ECO:0007669"/>
    <property type="project" value="UniProtKB-KW"/>
</dbReference>
<dbReference type="GO" id="GO:0005102">
    <property type="term" value="F:signaling receptor binding"/>
    <property type="evidence" value="ECO:0007669"/>
    <property type="project" value="InterPro"/>
</dbReference>
<dbReference type="GO" id="GO:0019835">
    <property type="term" value="P:cytolysis"/>
    <property type="evidence" value="ECO:0007669"/>
    <property type="project" value="InterPro"/>
</dbReference>
<dbReference type="GO" id="GO:0042742">
    <property type="term" value="P:defense response to bacterium"/>
    <property type="evidence" value="ECO:0007669"/>
    <property type="project" value="UniProtKB-KW"/>
</dbReference>
<dbReference type="GO" id="GO:0031640">
    <property type="term" value="P:killing of cells of another organism"/>
    <property type="evidence" value="ECO:0007669"/>
    <property type="project" value="UniProtKB-KW"/>
</dbReference>
<dbReference type="CDD" id="cd00085">
    <property type="entry name" value="HNHc"/>
    <property type="match status" value="1"/>
</dbReference>
<dbReference type="Gene3D" id="3.90.540.10">
    <property type="entry name" value="Colicin/pyocin, DNase domain"/>
    <property type="match status" value="1"/>
</dbReference>
<dbReference type="InterPro" id="IPR037146">
    <property type="entry name" value="Colicin/pyocin_DNase_dom_sf"/>
</dbReference>
<dbReference type="InterPro" id="IPR044925">
    <property type="entry name" value="His-Me_finger_sf"/>
</dbReference>
<dbReference type="InterPro" id="IPR003615">
    <property type="entry name" value="HNH_nuc"/>
</dbReference>
<dbReference type="InterPro" id="IPR003060">
    <property type="entry name" value="Pyocin_killer"/>
</dbReference>
<dbReference type="InterPro" id="IPR016128">
    <property type="entry name" value="Pyosin/cloacin_T_dom"/>
</dbReference>
<dbReference type="InterPro" id="IPR036302">
    <property type="entry name" value="Pyosin/cloacin_T_dom_sf"/>
</dbReference>
<dbReference type="Pfam" id="PF21431">
    <property type="entry name" value="Col-Pyo_DNase"/>
    <property type="match status" value="1"/>
</dbReference>
<dbReference type="Pfam" id="PF06958">
    <property type="entry name" value="Pyocin_S"/>
    <property type="match status" value="1"/>
</dbReference>
<dbReference type="PRINTS" id="PR01300">
    <property type="entry name" value="PYOCINKILLER"/>
</dbReference>
<dbReference type="SMART" id="SM00507">
    <property type="entry name" value="HNHc"/>
    <property type="match status" value="1"/>
</dbReference>
<dbReference type="SUPFAM" id="SSF69369">
    <property type="entry name" value="Cloacin translocation domain"/>
    <property type="match status" value="1"/>
</dbReference>
<dbReference type="SUPFAM" id="SSF54060">
    <property type="entry name" value="His-Me finger endonucleases"/>
    <property type="match status" value="1"/>
</dbReference>
<gene>
    <name type="primary">pys1</name>
</gene>
<evidence type="ECO:0000269" key="1">
    <source>
    </source>
</evidence>
<evidence type="ECO:0000305" key="2"/>
<comment type="function">
    <text>Causes breakdown of chromosomal DNA as well as complete inhibition of lipid synthesis in sensitive cells.</text>
</comment>
<comment type="subunit">
    <text>Purified pyocin S1 makes up a complex of the two (large and small) proteins. The large protein, but not the pyocin complex, shows in vitro DNase activity.</text>
</comment>
<comment type="miscellaneous">
    <text>Pyocins contain N-terminal receptor-binding domain, translocation domain and C-terminal DNase domain.</text>
</comment>
<comment type="similarity">
    <text evidence="2">Belongs to the colicin/pyosin nuclease family.</text>
</comment>
<protein>
    <recommendedName>
        <fullName>Pyocin-S1</fullName>
        <ecNumber>3.1.-.-</ecNumber>
    </recommendedName>
    <alternativeName>
        <fullName>Killer protein</fullName>
    </alternativeName>
</protein>
<accession>Q06583</accession>
<organism>
    <name type="scientific">Pseudomonas aeruginosa</name>
    <dbReference type="NCBI Taxonomy" id="287"/>
    <lineage>
        <taxon>Bacteria</taxon>
        <taxon>Pseudomonadati</taxon>
        <taxon>Pseudomonadota</taxon>
        <taxon>Gammaproteobacteria</taxon>
        <taxon>Pseudomonadales</taxon>
        <taxon>Pseudomonadaceae</taxon>
        <taxon>Pseudomonas</taxon>
    </lineage>
</organism>
<proteinExistence type="evidence at protein level"/>
<keyword id="KW-0044">Antibiotic</keyword>
<keyword id="KW-0929">Antimicrobial</keyword>
<keyword id="KW-0078">Bacteriocin</keyword>
<keyword id="KW-0903">Direct protein sequencing</keyword>
<keyword id="KW-0255">Endonuclease</keyword>
<keyword id="KW-0378">Hydrolase</keyword>
<keyword id="KW-0540">Nuclease</keyword>
<sequence length="618" mass="65629">MARPIADLIHFNSTTVTASGDVYYGPGGGTGIGPIARPIEHGLDSSTENGWQEFESYADVGVDPRRYVPLQVKEKRREIELQFRDAEKKLEASVQAELDKADAALGPAKNLAPLDVINRSLTIVGNALQQKNQKLLLNQKKITSLGAKNFLTRTAEEIGEQAVREGNINGPEAYMRFLDREMEGLTAAYNVKLFTEAISSLQIRMNTLTAAKASIEAAAANKAREQAAAEAKRKAEEQARQQAAIRAANTYAMPANGSVVATAAGRGLIQVAQGAASLAQAISDAIAVLGRVLASAPSVMAVGFASLTYSSRTAEQWQDQTPDSVRYALGMDAAKLGLPPSVNLNAVAKASGTVDLPMRLTNEARGNTTTLSVVSTDGVSVPKAVPVRMAAYNATTGLYEVTVPSTTAEAPPLILTWTPASPPGNQNPSSTTPVVPKPVPVYEGATLTPVKATPETYPGVITLPEDLIIGFPADSGIKPIYVMFRDPRDVPGAATGKGQPVSGNWLGAASQGEGAPIPSQIADKLRGKTFKNWRDFREQFWIAVANDPELSKQFNPGSLAVMRDGGAPYVRESEQAGGRIKIEIHHKVRVADGGGVYNMGNLVAVTPKRHIEIHKGGK</sequence>